<evidence type="ECO:0000255" key="1">
    <source>
        <dbReference type="HAMAP-Rule" id="MF_00204"/>
    </source>
</evidence>
<evidence type="ECO:0000256" key="2">
    <source>
        <dbReference type="SAM" id="MobiDB-lite"/>
    </source>
</evidence>
<organism>
    <name type="scientific">Shigella boydii serotype 4 (strain Sb227)</name>
    <dbReference type="NCBI Taxonomy" id="300268"/>
    <lineage>
        <taxon>Bacteria</taxon>
        <taxon>Pseudomonadati</taxon>
        <taxon>Pseudomonadota</taxon>
        <taxon>Gammaproteobacteria</taxon>
        <taxon>Enterobacterales</taxon>
        <taxon>Enterobacteriaceae</taxon>
        <taxon>Shigella</taxon>
    </lineage>
</organism>
<accession>Q324B3</accession>
<feature type="chain" id="PRO_0000227359" description="UvrABC system protein B">
    <location>
        <begin position="1"/>
        <end position="673"/>
    </location>
</feature>
<feature type="domain" description="Helicase ATP-binding" evidence="1">
    <location>
        <begin position="26"/>
        <end position="414"/>
    </location>
</feature>
<feature type="domain" description="Helicase C-terminal" evidence="1">
    <location>
        <begin position="431"/>
        <end position="597"/>
    </location>
</feature>
<feature type="domain" description="UVR" evidence="1">
    <location>
        <begin position="633"/>
        <end position="668"/>
    </location>
</feature>
<feature type="region of interest" description="Disordered" evidence="2">
    <location>
        <begin position="608"/>
        <end position="627"/>
    </location>
</feature>
<feature type="short sequence motif" description="Beta-hairpin">
    <location>
        <begin position="92"/>
        <end position="115"/>
    </location>
</feature>
<feature type="binding site" evidence="1">
    <location>
        <begin position="39"/>
        <end position="46"/>
    </location>
    <ligand>
        <name>ATP</name>
        <dbReference type="ChEBI" id="CHEBI:30616"/>
    </ligand>
</feature>
<sequence>MSKPFKLNSAFKPSGDQPEAIRRLEEGLEDGLAHQTLLGVTGSGKTFTIANVIADLQRPTMVLAPNKTLAAQLYGEMKEFFPENAVEYFVSYYDYYQPEAYVPSSDTFIEKDASVNEHIEQMRLSATKAMLERRDVVVVASVSAIYGLGDPDLYLKMMLHLTVGMIIDQRAILRRLAELQYARNDQAFQRGTFRVRGEVIDIFPAESDDIALRVELFDEEVERLSLFDPLTGQIVSTIPRFTIYPKTHYVTPRERIVQAMEEIKEELAARRKVLLENNKLLEEQRLTQRTQFDLEMMNELGYCSGIENYSRFLSGRGPGEPPPTLFDYLPADGLLVVDESHVTIPQIGGMYRGDRARKETLVEYGFRLPSALDNRPLKFEEFEALAPQTIYVSATPGNYELEKSGGDVVDQVVRPTGLLDPIIEVRPVATQVDDLLSEIRQRAAINERVLVTTLTKRMAEDLTEYLEEHGERVRYLHSDIDTVERMEIIRDLRLGEFDVLVGINLLREGLDMPEVSLVAILDADKEGFLRSERSLIQTIGRAARNVNGKAILYGDKITPSMAKAIGETERRREKQQKYNEEHGITPQGLNKKVVDILALGQNIAKTKAKGRGKSRPIVEPDNVPMDMSPKALQQKIHELEGLMMQHAQNLEFEEAAQIRDQLHQLRELFIAAS</sequence>
<proteinExistence type="inferred from homology"/>
<keyword id="KW-0067">ATP-binding</keyword>
<keyword id="KW-0963">Cytoplasm</keyword>
<keyword id="KW-0227">DNA damage</keyword>
<keyword id="KW-0228">DNA excision</keyword>
<keyword id="KW-0234">DNA repair</keyword>
<keyword id="KW-0267">Excision nuclease</keyword>
<keyword id="KW-0547">Nucleotide-binding</keyword>
<keyword id="KW-0742">SOS response</keyword>
<dbReference type="EMBL" id="CP000036">
    <property type="protein sequence ID" value="ABB65345.1"/>
    <property type="molecule type" value="Genomic_DNA"/>
</dbReference>
<dbReference type="RefSeq" id="WP_000042533.1">
    <property type="nucleotide sequence ID" value="NC_007613.1"/>
</dbReference>
<dbReference type="SMR" id="Q324B3"/>
<dbReference type="GeneID" id="93776651"/>
<dbReference type="KEGG" id="sbo:SBO_0666"/>
<dbReference type="HOGENOM" id="CLU_009621_2_1_6"/>
<dbReference type="Proteomes" id="UP000007067">
    <property type="component" value="Chromosome"/>
</dbReference>
<dbReference type="GO" id="GO:0005737">
    <property type="term" value="C:cytoplasm"/>
    <property type="evidence" value="ECO:0007669"/>
    <property type="project" value="UniProtKB-SubCell"/>
</dbReference>
<dbReference type="GO" id="GO:0009380">
    <property type="term" value="C:excinuclease repair complex"/>
    <property type="evidence" value="ECO:0007669"/>
    <property type="project" value="InterPro"/>
</dbReference>
<dbReference type="GO" id="GO:0005524">
    <property type="term" value="F:ATP binding"/>
    <property type="evidence" value="ECO:0007669"/>
    <property type="project" value="UniProtKB-UniRule"/>
</dbReference>
<dbReference type="GO" id="GO:0016887">
    <property type="term" value="F:ATP hydrolysis activity"/>
    <property type="evidence" value="ECO:0007669"/>
    <property type="project" value="InterPro"/>
</dbReference>
<dbReference type="GO" id="GO:0003677">
    <property type="term" value="F:DNA binding"/>
    <property type="evidence" value="ECO:0007669"/>
    <property type="project" value="UniProtKB-UniRule"/>
</dbReference>
<dbReference type="GO" id="GO:0009381">
    <property type="term" value="F:excinuclease ABC activity"/>
    <property type="evidence" value="ECO:0007669"/>
    <property type="project" value="UniProtKB-UniRule"/>
</dbReference>
<dbReference type="GO" id="GO:0006289">
    <property type="term" value="P:nucleotide-excision repair"/>
    <property type="evidence" value="ECO:0007669"/>
    <property type="project" value="UniProtKB-UniRule"/>
</dbReference>
<dbReference type="GO" id="GO:0009432">
    <property type="term" value="P:SOS response"/>
    <property type="evidence" value="ECO:0007669"/>
    <property type="project" value="UniProtKB-UniRule"/>
</dbReference>
<dbReference type="CDD" id="cd17916">
    <property type="entry name" value="DEXHc_UvrB"/>
    <property type="match status" value="1"/>
</dbReference>
<dbReference type="CDD" id="cd18790">
    <property type="entry name" value="SF2_C_UvrB"/>
    <property type="match status" value="1"/>
</dbReference>
<dbReference type="FunFam" id="3.40.50.300:FF:000257">
    <property type="entry name" value="UvrABC system protein B"/>
    <property type="match status" value="1"/>
</dbReference>
<dbReference type="FunFam" id="3.40.50.300:FF:000401">
    <property type="entry name" value="UvrABC system protein B"/>
    <property type="match status" value="1"/>
</dbReference>
<dbReference type="FunFam" id="3.40.50.300:FF:000477">
    <property type="entry name" value="UvrABC system protein B"/>
    <property type="match status" value="1"/>
</dbReference>
<dbReference type="Gene3D" id="3.40.50.300">
    <property type="entry name" value="P-loop containing nucleotide triphosphate hydrolases"/>
    <property type="match status" value="3"/>
</dbReference>
<dbReference type="Gene3D" id="4.10.860.10">
    <property type="entry name" value="UVR domain"/>
    <property type="match status" value="1"/>
</dbReference>
<dbReference type="HAMAP" id="MF_00204">
    <property type="entry name" value="UvrB"/>
    <property type="match status" value="1"/>
</dbReference>
<dbReference type="InterPro" id="IPR006935">
    <property type="entry name" value="Helicase/UvrB_N"/>
</dbReference>
<dbReference type="InterPro" id="IPR014001">
    <property type="entry name" value="Helicase_ATP-bd"/>
</dbReference>
<dbReference type="InterPro" id="IPR001650">
    <property type="entry name" value="Helicase_C-like"/>
</dbReference>
<dbReference type="InterPro" id="IPR027417">
    <property type="entry name" value="P-loop_NTPase"/>
</dbReference>
<dbReference type="InterPro" id="IPR001943">
    <property type="entry name" value="UVR_dom"/>
</dbReference>
<dbReference type="InterPro" id="IPR036876">
    <property type="entry name" value="UVR_dom_sf"/>
</dbReference>
<dbReference type="InterPro" id="IPR004807">
    <property type="entry name" value="UvrB"/>
</dbReference>
<dbReference type="InterPro" id="IPR041471">
    <property type="entry name" value="UvrB_inter"/>
</dbReference>
<dbReference type="InterPro" id="IPR024759">
    <property type="entry name" value="UvrB_YAD/RRR_dom"/>
</dbReference>
<dbReference type="NCBIfam" id="NF003673">
    <property type="entry name" value="PRK05298.1"/>
    <property type="match status" value="1"/>
</dbReference>
<dbReference type="NCBIfam" id="TIGR00631">
    <property type="entry name" value="uvrb"/>
    <property type="match status" value="1"/>
</dbReference>
<dbReference type="PANTHER" id="PTHR24029">
    <property type="entry name" value="UVRABC SYSTEM PROTEIN B"/>
    <property type="match status" value="1"/>
</dbReference>
<dbReference type="PANTHER" id="PTHR24029:SF0">
    <property type="entry name" value="UVRABC SYSTEM PROTEIN B"/>
    <property type="match status" value="1"/>
</dbReference>
<dbReference type="Pfam" id="PF00271">
    <property type="entry name" value="Helicase_C"/>
    <property type="match status" value="1"/>
</dbReference>
<dbReference type="Pfam" id="PF04851">
    <property type="entry name" value="ResIII"/>
    <property type="match status" value="1"/>
</dbReference>
<dbReference type="Pfam" id="PF02151">
    <property type="entry name" value="UVR"/>
    <property type="match status" value="1"/>
</dbReference>
<dbReference type="Pfam" id="PF12344">
    <property type="entry name" value="UvrB"/>
    <property type="match status" value="1"/>
</dbReference>
<dbReference type="Pfam" id="PF17757">
    <property type="entry name" value="UvrB_inter"/>
    <property type="match status" value="1"/>
</dbReference>
<dbReference type="SMART" id="SM00487">
    <property type="entry name" value="DEXDc"/>
    <property type="match status" value="1"/>
</dbReference>
<dbReference type="SMART" id="SM00490">
    <property type="entry name" value="HELICc"/>
    <property type="match status" value="1"/>
</dbReference>
<dbReference type="SUPFAM" id="SSF46600">
    <property type="entry name" value="C-terminal UvrC-binding domain of UvrB"/>
    <property type="match status" value="1"/>
</dbReference>
<dbReference type="SUPFAM" id="SSF52540">
    <property type="entry name" value="P-loop containing nucleoside triphosphate hydrolases"/>
    <property type="match status" value="2"/>
</dbReference>
<dbReference type="PROSITE" id="PS51192">
    <property type="entry name" value="HELICASE_ATP_BIND_1"/>
    <property type="match status" value="1"/>
</dbReference>
<dbReference type="PROSITE" id="PS51194">
    <property type="entry name" value="HELICASE_CTER"/>
    <property type="match status" value="1"/>
</dbReference>
<dbReference type="PROSITE" id="PS50151">
    <property type="entry name" value="UVR"/>
    <property type="match status" value="1"/>
</dbReference>
<name>UVRB_SHIBS</name>
<gene>
    <name evidence="1" type="primary">uvrB</name>
    <name type="ordered locus">SBO_0666</name>
</gene>
<comment type="function">
    <text evidence="1">The UvrABC repair system catalyzes the recognition and processing of DNA lesions. A damage recognition complex composed of 2 UvrA and 2 UvrB subunits scans DNA for abnormalities. Upon binding of the UvrA(2)B(2) complex to a putative damaged site, the DNA wraps around one UvrB monomer. DNA wrap is dependent on ATP binding by UvrB and probably causes local melting of the DNA helix, facilitating insertion of UvrB beta-hairpin between the DNA strands. Then UvrB probes one DNA strand for the presence of a lesion. If a lesion is found the UvrA subunits dissociate and the UvrB-DNA preincision complex is formed. This complex is subsequently bound by UvrC and the second UvrB is released. If no lesion is found, the DNA wraps around the other UvrB subunit that will check the other stand for damage.</text>
</comment>
<comment type="subunit">
    <text evidence="1">Forms a heterotetramer with UvrA during the search for lesions. Interacts with UvrC in an incision complex.</text>
</comment>
<comment type="subcellular location">
    <subcellularLocation>
        <location evidence="1">Cytoplasm</location>
    </subcellularLocation>
</comment>
<comment type="domain">
    <text evidence="1">The beta-hairpin motif is involved in DNA binding.</text>
</comment>
<comment type="similarity">
    <text evidence="1">Belongs to the UvrB family.</text>
</comment>
<protein>
    <recommendedName>
        <fullName evidence="1">UvrABC system protein B</fullName>
        <shortName evidence="1">Protein UvrB</shortName>
    </recommendedName>
    <alternativeName>
        <fullName evidence="1">Excinuclease ABC subunit B</fullName>
    </alternativeName>
</protein>
<reference key="1">
    <citation type="journal article" date="2005" name="Nucleic Acids Res.">
        <title>Genome dynamics and diversity of Shigella species, the etiologic agents of bacillary dysentery.</title>
        <authorList>
            <person name="Yang F."/>
            <person name="Yang J."/>
            <person name="Zhang X."/>
            <person name="Chen L."/>
            <person name="Jiang Y."/>
            <person name="Yan Y."/>
            <person name="Tang X."/>
            <person name="Wang J."/>
            <person name="Xiong Z."/>
            <person name="Dong J."/>
            <person name="Xue Y."/>
            <person name="Zhu Y."/>
            <person name="Xu X."/>
            <person name="Sun L."/>
            <person name="Chen S."/>
            <person name="Nie H."/>
            <person name="Peng J."/>
            <person name="Xu J."/>
            <person name="Wang Y."/>
            <person name="Yuan Z."/>
            <person name="Wen Y."/>
            <person name="Yao Z."/>
            <person name="Shen Y."/>
            <person name="Qiang B."/>
            <person name="Hou Y."/>
            <person name="Yu J."/>
            <person name="Jin Q."/>
        </authorList>
    </citation>
    <scope>NUCLEOTIDE SEQUENCE [LARGE SCALE GENOMIC DNA]</scope>
    <source>
        <strain>Sb227</strain>
    </source>
</reference>